<evidence type="ECO:0000250" key="1"/>
<evidence type="ECO:0000255" key="2">
    <source>
        <dbReference type="PROSITE-ProRule" id="PRU00175"/>
    </source>
</evidence>
<evidence type="ECO:0000255" key="3">
    <source>
        <dbReference type="PROSITE-ProRule" id="PRU00541"/>
    </source>
</evidence>
<evidence type="ECO:0000255" key="4">
    <source>
        <dbReference type="PROSITE-ProRule" id="PRU00542"/>
    </source>
</evidence>
<evidence type="ECO:0000256" key="5">
    <source>
        <dbReference type="SAM" id="MobiDB-lite"/>
    </source>
</evidence>
<evidence type="ECO:0000305" key="6"/>
<keyword id="KW-0067">ATP-binding</keyword>
<keyword id="KW-0963">Cytoplasm</keyword>
<keyword id="KW-0227">DNA damage</keyword>
<keyword id="KW-0234">DNA repair</keyword>
<keyword id="KW-0238">DNA-binding</keyword>
<keyword id="KW-0347">Helicase</keyword>
<keyword id="KW-0378">Hydrolase</keyword>
<keyword id="KW-0479">Metal-binding</keyword>
<keyword id="KW-0547">Nucleotide-binding</keyword>
<keyword id="KW-0539">Nucleus</keyword>
<keyword id="KW-1185">Reference proteome</keyword>
<keyword id="KW-0862">Zinc</keyword>
<keyword id="KW-0863">Zinc-finger</keyword>
<name>RAD5_MYCMD</name>
<protein>
    <recommendedName>
        <fullName>DNA repair protein RAD5</fullName>
        <ecNumber>3.6.4.-</ecNumber>
    </recommendedName>
</protein>
<accession>Q4PGG5</accession>
<accession>A0A0D1EB15</accession>
<reference key="1">
    <citation type="journal article" date="2006" name="Nature">
        <title>Insights from the genome of the biotrophic fungal plant pathogen Ustilago maydis.</title>
        <authorList>
            <person name="Kaemper J."/>
            <person name="Kahmann R."/>
            <person name="Boelker M."/>
            <person name="Ma L.-J."/>
            <person name="Brefort T."/>
            <person name="Saville B.J."/>
            <person name="Banuett F."/>
            <person name="Kronstad J.W."/>
            <person name="Gold S.E."/>
            <person name="Mueller O."/>
            <person name="Perlin M.H."/>
            <person name="Woesten H.A.B."/>
            <person name="de Vries R."/>
            <person name="Ruiz-Herrera J."/>
            <person name="Reynaga-Pena C.G."/>
            <person name="Snetselaar K."/>
            <person name="McCann M."/>
            <person name="Perez-Martin J."/>
            <person name="Feldbruegge M."/>
            <person name="Basse C.W."/>
            <person name="Steinberg G."/>
            <person name="Ibeas J.I."/>
            <person name="Holloman W."/>
            <person name="Guzman P."/>
            <person name="Farman M.L."/>
            <person name="Stajich J.E."/>
            <person name="Sentandreu R."/>
            <person name="Gonzalez-Prieto J.M."/>
            <person name="Kennell J.C."/>
            <person name="Molina L."/>
            <person name="Schirawski J."/>
            <person name="Mendoza-Mendoza A."/>
            <person name="Greilinger D."/>
            <person name="Muench K."/>
            <person name="Roessel N."/>
            <person name="Scherer M."/>
            <person name="Vranes M."/>
            <person name="Ladendorf O."/>
            <person name="Vincon V."/>
            <person name="Fuchs U."/>
            <person name="Sandrock B."/>
            <person name="Meng S."/>
            <person name="Ho E.C.H."/>
            <person name="Cahill M.J."/>
            <person name="Boyce K.J."/>
            <person name="Klose J."/>
            <person name="Klosterman S.J."/>
            <person name="Deelstra H.J."/>
            <person name="Ortiz-Castellanos L."/>
            <person name="Li W."/>
            <person name="Sanchez-Alonso P."/>
            <person name="Schreier P.H."/>
            <person name="Haeuser-Hahn I."/>
            <person name="Vaupel M."/>
            <person name="Koopmann E."/>
            <person name="Friedrich G."/>
            <person name="Voss H."/>
            <person name="Schlueter T."/>
            <person name="Margolis J."/>
            <person name="Platt D."/>
            <person name="Swimmer C."/>
            <person name="Gnirke A."/>
            <person name="Chen F."/>
            <person name="Vysotskaia V."/>
            <person name="Mannhaupt G."/>
            <person name="Gueldener U."/>
            <person name="Muensterkoetter M."/>
            <person name="Haase D."/>
            <person name="Oesterheld M."/>
            <person name="Mewes H.-W."/>
            <person name="Mauceli E.W."/>
            <person name="DeCaprio D."/>
            <person name="Wade C.M."/>
            <person name="Butler J."/>
            <person name="Young S.K."/>
            <person name="Jaffe D.B."/>
            <person name="Calvo S.E."/>
            <person name="Nusbaum C."/>
            <person name="Galagan J.E."/>
            <person name="Birren B.W."/>
        </authorList>
    </citation>
    <scope>NUCLEOTIDE SEQUENCE [LARGE SCALE GENOMIC DNA]</scope>
    <source>
        <strain>DSM 14603 / FGSC 9021 / UM521</strain>
    </source>
</reference>
<reference key="2">
    <citation type="submission" date="2014-09" db="EMBL/GenBank/DDBJ databases">
        <authorList>
            <person name="Gueldener U."/>
            <person name="Muensterkoetter M."/>
            <person name="Walter M.C."/>
            <person name="Mannhaupt G."/>
            <person name="Kahmann R."/>
        </authorList>
    </citation>
    <scope>GENOME REANNOTATION</scope>
    <source>
        <strain>DSM 14603 / FGSC 9021 / UM521</strain>
    </source>
</reference>
<dbReference type="EC" id="3.6.4.-"/>
<dbReference type="EMBL" id="CM003140">
    <property type="protein sequence ID" value="KIS72396.1"/>
    <property type="molecule type" value="Genomic_DNA"/>
</dbReference>
<dbReference type="RefSeq" id="XP_011386570.1">
    <property type="nucleotide sequence ID" value="XM_011388268.1"/>
</dbReference>
<dbReference type="SMR" id="Q4PGG5"/>
<dbReference type="FunCoup" id="Q4PGG5">
    <property type="interactions" value="207"/>
</dbReference>
<dbReference type="STRING" id="237631.Q4PGG5"/>
<dbReference type="EnsemblFungi" id="KIS72396">
    <property type="protein sequence ID" value="KIS72396"/>
    <property type="gene ID" value="UMAG_00798"/>
</dbReference>
<dbReference type="GeneID" id="23562003"/>
<dbReference type="KEGG" id="uma:UMAG_00798"/>
<dbReference type="VEuPathDB" id="FungiDB:UMAG_00798"/>
<dbReference type="eggNOG" id="KOG1001">
    <property type="taxonomic scope" value="Eukaryota"/>
</dbReference>
<dbReference type="HOGENOM" id="CLU_000315_2_5_1"/>
<dbReference type="InParanoid" id="Q4PGG5"/>
<dbReference type="OMA" id="HTHRFED"/>
<dbReference type="OrthoDB" id="448448at2759"/>
<dbReference type="Proteomes" id="UP000000561">
    <property type="component" value="Chromosome 1"/>
</dbReference>
<dbReference type="GO" id="GO:0005737">
    <property type="term" value="C:cytoplasm"/>
    <property type="evidence" value="ECO:0007669"/>
    <property type="project" value="UniProtKB-SubCell"/>
</dbReference>
<dbReference type="GO" id="GO:0005634">
    <property type="term" value="C:nucleus"/>
    <property type="evidence" value="ECO:0000318"/>
    <property type="project" value="GO_Central"/>
</dbReference>
<dbReference type="GO" id="GO:0005524">
    <property type="term" value="F:ATP binding"/>
    <property type="evidence" value="ECO:0007669"/>
    <property type="project" value="UniProtKB-KW"/>
</dbReference>
<dbReference type="GO" id="GO:0008094">
    <property type="term" value="F:ATP-dependent activity, acting on DNA"/>
    <property type="evidence" value="ECO:0000318"/>
    <property type="project" value="GO_Central"/>
</dbReference>
<dbReference type="GO" id="GO:0003677">
    <property type="term" value="F:DNA binding"/>
    <property type="evidence" value="ECO:0007669"/>
    <property type="project" value="UniProtKB-KW"/>
</dbReference>
<dbReference type="GO" id="GO:0004386">
    <property type="term" value="F:helicase activity"/>
    <property type="evidence" value="ECO:0007669"/>
    <property type="project" value="UniProtKB-KW"/>
</dbReference>
<dbReference type="GO" id="GO:0016818">
    <property type="term" value="F:hydrolase activity, acting on acid anhydrides, in phosphorus-containing anhydrides"/>
    <property type="evidence" value="ECO:0007669"/>
    <property type="project" value="InterPro"/>
</dbReference>
<dbReference type="GO" id="GO:0008270">
    <property type="term" value="F:zinc ion binding"/>
    <property type="evidence" value="ECO:0007669"/>
    <property type="project" value="UniProtKB-KW"/>
</dbReference>
<dbReference type="GO" id="GO:0006281">
    <property type="term" value="P:DNA repair"/>
    <property type="evidence" value="ECO:0000318"/>
    <property type="project" value="GO_Central"/>
</dbReference>
<dbReference type="CDD" id="cd18008">
    <property type="entry name" value="DEXDc_SHPRH-like"/>
    <property type="match status" value="1"/>
</dbReference>
<dbReference type="CDD" id="cd16572">
    <property type="entry name" value="RING-HC_SpRad8-like"/>
    <property type="match status" value="1"/>
</dbReference>
<dbReference type="CDD" id="cd18793">
    <property type="entry name" value="SF2_C_SNF"/>
    <property type="match status" value="1"/>
</dbReference>
<dbReference type="Gene3D" id="3.40.50.300">
    <property type="entry name" value="P-loop containing nucleotide triphosphate hydrolases"/>
    <property type="match status" value="2"/>
</dbReference>
<dbReference type="Gene3D" id="3.40.50.10810">
    <property type="entry name" value="Tandem AAA-ATPase domain"/>
    <property type="match status" value="2"/>
</dbReference>
<dbReference type="Gene3D" id="3.30.40.10">
    <property type="entry name" value="Zinc/RING finger domain, C3HC4 (zinc finger)"/>
    <property type="match status" value="1"/>
</dbReference>
<dbReference type="InterPro" id="IPR014001">
    <property type="entry name" value="Helicase_ATP-bd"/>
</dbReference>
<dbReference type="InterPro" id="IPR001650">
    <property type="entry name" value="Helicase_C-like"/>
</dbReference>
<dbReference type="InterPro" id="IPR014905">
    <property type="entry name" value="HIRAN"/>
</dbReference>
<dbReference type="InterPro" id="IPR027417">
    <property type="entry name" value="P-loop_NTPase"/>
</dbReference>
<dbReference type="InterPro" id="IPR038718">
    <property type="entry name" value="SNF2-like_sf"/>
</dbReference>
<dbReference type="InterPro" id="IPR049730">
    <property type="entry name" value="SNF2/RAD54-like_C"/>
</dbReference>
<dbReference type="InterPro" id="IPR000330">
    <property type="entry name" value="SNF2_N"/>
</dbReference>
<dbReference type="InterPro" id="IPR050628">
    <property type="entry name" value="SNF2_RAD54_helicase_TF"/>
</dbReference>
<dbReference type="InterPro" id="IPR001841">
    <property type="entry name" value="Znf_RING"/>
</dbReference>
<dbReference type="InterPro" id="IPR013083">
    <property type="entry name" value="Znf_RING/FYVE/PHD"/>
</dbReference>
<dbReference type="PANTHER" id="PTHR45626:SF22">
    <property type="entry name" value="DNA REPAIR PROTEIN RAD5"/>
    <property type="match status" value="1"/>
</dbReference>
<dbReference type="PANTHER" id="PTHR45626">
    <property type="entry name" value="TRANSCRIPTION TERMINATION FACTOR 2-RELATED"/>
    <property type="match status" value="1"/>
</dbReference>
<dbReference type="Pfam" id="PF00271">
    <property type="entry name" value="Helicase_C"/>
    <property type="match status" value="1"/>
</dbReference>
<dbReference type="Pfam" id="PF08797">
    <property type="entry name" value="HIRAN"/>
    <property type="match status" value="1"/>
</dbReference>
<dbReference type="Pfam" id="PF00176">
    <property type="entry name" value="SNF2-rel_dom"/>
    <property type="match status" value="1"/>
</dbReference>
<dbReference type="SMART" id="SM00487">
    <property type="entry name" value="DEXDc"/>
    <property type="match status" value="1"/>
</dbReference>
<dbReference type="SMART" id="SM00490">
    <property type="entry name" value="HELICc"/>
    <property type="match status" value="1"/>
</dbReference>
<dbReference type="SMART" id="SM00910">
    <property type="entry name" value="HIRAN"/>
    <property type="match status" value="1"/>
</dbReference>
<dbReference type="SMART" id="SM00184">
    <property type="entry name" value="RING"/>
    <property type="match status" value="1"/>
</dbReference>
<dbReference type="SUPFAM" id="SSF52540">
    <property type="entry name" value="P-loop containing nucleoside triphosphate hydrolases"/>
    <property type="match status" value="2"/>
</dbReference>
<dbReference type="SUPFAM" id="SSF57850">
    <property type="entry name" value="RING/U-box"/>
    <property type="match status" value="1"/>
</dbReference>
<dbReference type="PROSITE" id="PS51192">
    <property type="entry name" value="HELICASE_ATP_BIND_1"/>
    <property type="match status" value="1"/>
</dbReference>
<dbReference type="PROSITE" id="PS51194">
    <property type="entry name" value="HELICASE_CTER"/>
    <property type="match status" value="1"/>
</dbReference>
<dbReference type="PROSITE" id="PS50089">
    <property type="entry name" value="ZF_RING_2"/>
    <property type="match status" value="1"/>
</dbReference>
<organism>
    <name type="scientific">Mycosarcoma maydis</name>
    <name type="common">Corn smut fungus</name>
    <name type="synonym">Ustilago maydis</name>
    <dbReference type="NCBI Taxonomy" id="5270"/>
    <lineage>
        <taxon>Eukaryota</taxon>
        <taxon>Fungi</taxon>
        <taxon>Dikarya</taxon>
        <taxon>Basidiomycota</taxon>
        <taxon>Ustilaginomycotina</taxon>
        <taxon>Ustilaginomycetes</taxon>
        <taxon>Ustilaginales</taxon>
        <taxon>Ustilaginaceae</taxon>
        <taxon>Mycosarcoma</taxon>
    </lineage>
</organism>
<gene>
    <name type="primary">RAD5</name>
    <name type="ORF">UMAG_00798</name>
</gene>
<sequence length="1387" mass="152271">MTTQSSAGPQSQPSRDFFASSPSATPGSPSKQASQASKQPDALVTPSSVTANTSVCADNLLDHHQHEPQHDAASVVIGIEGSINDSAAIHRRRQQPRRAAVQNAKPLFLAEDEDDAINWPVADQEEGDDFFSTQLADQKVKRPARATVNSDEKDFQPSTLSSLSSPPSETVYKRSPPSDDVQASNGPAKRPKKSWSTPASVATTKSAPRHCSPTPDPRLRHDAFDRRYIGTFVLSAWSLSKGSSYVKPGDAVRIFRPRKKHATAEPKIASKLTNGGMQKAKQTTLNFRGASAGPTNFFTSKQKSKEKEHFIVRFSNMRGFEVGRLPLEVAIWMSKLIDAGIAEFEGVVVDCPPSLTVGCDIILQVKAYIKFDAFFSTLLGSREFDDQNEALRPETAESDLEKTLRERKISLLRMFRVCDLKPRLSNAILKSHKASDDFSSEAMLDQYGGDIQGAVKHAGSDLAISTENGTQLPHAGEDASSTAIDLDVEGDTDAVAHLEIADQLQSAKRQTDGDADTEENDGTELNLNQLDQVYRKAQANDAHLPEVEPPESFVLTLRPYQKQALGWMKNMEMAPGQSSSSQEQSVTQQGNGDTGERNVSLHPLWEEYEFPLDYDNPQANERLILSATRLFYFNPYTGDLSLDFQRASKGSRGGILADEMGLGKTIMVASLLHANRTSDPGEESEGEINAVDAAEGDVSTKRKGSAKQTSLASAFAASTSSVDQRKALLKASVSKGKASLVVAPMSLIGQWRDELIRASAPGSLTPVLYYADTKGDLLAQLESGKVDVVITSYGTLVTEYRRFLDGGGASNRHLSVSAPLYCIDWLRVILDEAHNIKNRSTMNARACCDLVSRRRWALTGTPIINRLTDLFSLLKFLRVEPWGDFSFFNSFVCKPFQAKSTKALDVVQVILESVLLRREKKMKDKDGKPIVELPPKTIVVKELEFSELERRIYDNVYRRAYLQFASLKANGTVTRNLSVIFSVLMRLRQAVCHPSLVLKAGSKVQSGGIRKDHVDRNGEVGVGEGDHVEVDADAVEFGLDSDHVGGNGTPSTQDLRELVAQFQLDEAGEAGDDSTESYTKATVERLIGEMHGDQATVPPVVSDGENECPICLEESQISPCYLPRCMHSACKACLVDYLGQCKQKGDQGACPTCRKGPVQETDLIEAIRTRPATRAASGGASPTDRPGKACTLTSVPSVIYVRNNLRTSTKLSALISHLNTLRATEAAFKGVIFSQFTSFLDLIEPVLTRYRFHFLRLDGSTPQKVRDKLVLEFQSPSPTNHVVLFLISLKAGGVGLNLTAANKIWLLDFWWNSSIENQAIDRIHRFGQTSPVSVFRYIIKDSIEDRILLIQKRKDMLIKHALNTDNHPHGTKPNSEMLANLDLLFGE</sequence>
<proteinExistence type="inferred from homology"/>
<feature type="chain" id="PRO_0000056128" description="DNA repair protein RAD5">
    <location>
        <begin position="1"/>
        <end position="1387"/>
    </location>
</feature>
<feature type="domain" description="Helicase ATP-binding" evidence="3">
    <location>
        <begin position="645"/>
        <end position="880"/>
    </location>
</feature>
<feature type="domain" description="Helicase C-terminal" evidence="4">
    <location>
        <begin position="1213"/>
        <end position="1379"/>
    </location>
</feature>
<feature type="zinc finger region" description="RING-type" evidence="2">
    <location>
        <begin position="1108"/>
        <end position="1154"/>
    </location>
</feature>
<feature type="region of interest" description="Disordered" evidence="5">
    <location>
        <begin position="1"/>
        <end position="49"/>
    </location>
</feature>
<feature type="region of interest" description="Disordered" evidence="5">
    <location>
        <begin position="132"/>
        <end position="219"/>
    </location>
</feature>
<feature type="region of interest" description="Disordered" evidence="5">
    <location>
        <begin position="503"/>
        <end position="528"/>
    </location>
</feature>
<feature type="region of interest" description="Disordered" evidence="5">
    <location>
        <begin position="573"/>
        <end position="598"/>
    </location>
</feature>
<feature type="region of interest" description="Disordered" evidence="5">
    <location>
        <begin position="676"/>
        <end position="704"/>
    </location>
</feature>
<feature type="short sequence motif" description="DEAH box">
    <location>
        <begin position="831"/>
        <end position="834"/>
    </location>
</feature>
<feature type="compositionally biased region" description="Polar residues" evidence="5">
    <location>
        <begin position="1"/>
        <end position="14"/>
    </location>
</feature>
<feature type="compositionally biased region" description="Low complexity" evidence="5">
    <location>
        <begin position="19"/>
        <end position="40"/>
    </location>
</feature>
<feature type="compositionally biased region" description="Low complexity" evidence="5">
    <location>
        <begin position="157"/>
        <end position="168"/>
    </location>
</feature>
<feature type="compositionally biased region" description="Polar residues" evidence="5">
    <location>
        <begin position="194"/>
        <end position="206"/>
    </location>
</feature>
<feature type="compositionally biased region" description="Acidic residues" evidence="5">
    <location>
        <begin position="513"/>
        <end position="522"/>
    </location>
</feature>
<feature type="compositionally biased region" description="Low complexity" evidence="5">
    <location>
        <begin position="577"/>
        <end position="589"/>
    </location>
</feature>
<feature type="binding site" evidence="3">
    <location>
        <begin position="658"/>
        <end position="665"/>
    </location>
    <ligand>
        <name>ATP</name>
        <dbReference type="ChEBI" id="CHEBI:30616"/>
    </ligand>
</feature>
<comment type="function">
    <text evidence="1">Probable helicase, member of the UBC2/RAD6 epistasis group. Functions with DNA repair protein RAD18 in error-free postreplication DNA repair. Involved in the maintenance of wild-type rates of instability of simple repetitive sequences such as poly(GT) repeats. Seems to be involved in maintaining a balance which acts in favor of error-prone non-homologous joining during DNA double-strand breaks repairs (By similarity).</text>
</comment>
<comment type="subcellular location">
    <subcellularLocation>
        <location evidence="1">Cytoplasm</location>
    </subcellularLocation>
    <subcellularLocation>
        <location evidence="1">Nucleus</location>
    </subcellularLocation>
</comment>
<comment type="similarity">
    <text evidence="6">Belongs to the SNF2/RAD54 helicase family.</text>
</comment>